<reference key="1">
    <citation type="journal article" date="2008" name="J. Bacteriol.">
        <title>The complete genome sequence of Escherichia coli DH10B: insights into the biology of a laboratory workhorse.</title>
        <authorList>
            <person name="Durfee T."/>
            <person name="Nelson R."/>
            <person name="Baldwin S."/>
            <person name="Plunkett G. III"/>
            <person name="Burland V."/>
            <person name="Mau B."/>
            <person name="Petrosino J.F."/>
            <person name="Qin X."/>
            <person name="Muzny D.M."/>
            <person name="Ayele M."/>
            <person name="Gibbs R.A."/>
            <person name="Csorgo B."/>
            <person name="Posfai G."/>
            <person name="Weinstock G.M."/>
            <person name="Blattner F.R."/>
        </authorList>
    </citation>
    <scope>NUCLEOTIDE SEQUENCE [LARGE SCALE GENOMIC DNA]</scope>
    <source>
        <strain>K12 / DH10B</strain>
    </source>
</reference>
<sequence length="287" mass="31577">MAGAKEIRSKIASVQNTQKITKAMEMVAASKMRKSQDRMAASRPYAETMRKVIGHLAHGNLEYKHPYLEDRDVKRVGYLVVSTDRGLCGGLNINLFKKLLAEMKTWTDKGVQCDLAMIGSKGVSFFNSVGGNVVAQVTGMGDNPSLSELIGPVKVMLQAYDEGRLDKLYIVSNKFINTMSQVPTISQLLPLPASDDDDLKHKSWDYLYEPDPKALLDTLLRRYVESQVYQGVVENLASEQAARMVAMKAATDNGGSLIKELQLVYNKARQASITQELTEIVSGAAAV</sequence>
<proteinExistence type="inferred from homology"/>
<name>ATPG_ECODH</name>
<comment type="function">
    <text evidence="1">Produces ATP from ADP in the presence of a proton gradient across the membrane. The gamma chain is believed to be important in regulating ATPase activity and the flow of protons through the CF(0) complex.</text>
</comment>
<comment type="subunit">
    <text evidence="1">F-type ATPases have 2 components, CF(1) - the catalytic core - and CF(0) - the membrane proton channel. CF(1) has five subunits: alpha(3), beta(3), gamma(1), delta(1), epsilon(1). CF(0) has three main subunits: a, b and c.</text>
</comment>
<comment type="subcellular location">
    <subcellularLocation>
        <location evidence="1">Cell inner membrane</location>
        <topology evidence="1">Peripheral membrane protein</topology>
    </subcellularLocation>
</comment>
<comment type="similarity">
    <text evidence="1">Belongs to the ATPase gamma chain family.</text>
</comment>
<keyword id="KW-0066">ATP synthesis</keyword>
<keyword id="KW-0997">Cell inner membrane</keyword>
<keyword id="KW-1003">Cell membrane</keyword>
<keyword id="KW-0139">CF(1)</keyword>
<keyword id="KW-0375">Hydrogen ion transport</keyword>
<keyword id="KW-0406">Ion transport</keyword>
<keyword id="KW-0472">Membrane</keyword>
<keyword id="KW-0813">Transport</keyword>
<dbReference type="EMBL" id="CP000948">
    <property type="protein sequence ID" value="ACB04776.1"/>
    <property type="molecule type" value="Genomic_DNA"/>
</dbReference>
<dbReference type="RefSeq" id="WP_000896498.1">
    <property type="nucleotide sequence ID" value="NC_010473.1"/>
</dbReference>
<dbReference type="SMR" id="B1X9W1"/>
<dbReference type="GeneID" id="93778234"/>
<dbReference type="KEGG" id="ecd:ECDH10B_3920"/>
<dbReference type="HOGENOM" id="CLU_050669_0_1_6"/>
<dbReference type="GO" id="GO:0005886">
    <property type="term" value="C:plasma membrane"/>
    <property type="evidence" value="ECO:0007669"/>
    <property type="project" value="UniProtKB-SubCell"/>
</dbReference>
<dbReference type="GO" id="GO:0045259">
    <property type="term" value="C:proton-transporting ATP synthase complex"/>
    <property type="evidence" value="ECO:0007669"/>
    <property type="project" value="UniProtKB-KW"/>
</dbReference>
<dbReference type="GO" id="GO:0005524">
    <property type="term" value="F:ATP binding"/>
    <property type="evidence" value="ECO:0007669"/>
    <property type="project" value="UniProtKB-UniRule"/>
</dbReference>
<dbReference type="GO" id="GO:0046933">
    <property type="term" value="F:proton-transporting ATP synthase activity, rotational mechanism"/>
    <property type="evidence" value="ECO:0007669"/>
    <property type="project" value="UniProtKB-UniRule"/>
</dbReference>
<dbReference type="GO" id="GO:0042777">
    <property type="term" value="P:proton motive force-driven plasma membrane ATP synthesis"/>
    <property type="evidence" value="ECO:0007669"/>
    <property type="project" value="UniProtKB-UniRule"/>
</dbReference>
<dbReference type="CDD" id="cd12151">
    <property type="entry name" value="F1-ATPase_gamma"/>
    <property type="match status" value="1"/>
</dbReference>
<dbReference type="FunFam" id="1.10.287.80:FF:000005">
    <property type="entry name" value="ATP synthase gamma chain"/>
    <property type="match status" value="2"/>
</dbReference>
<dbReference type="FunFam" id="3.40.1380.10:FF:000001">
    <property type="entry name" value="ATP synthase gamma chain"/>
    <property type="match status" value="1"/>
</dbReference>
<dbReference type="Gene3D" id="3.40.1380.10">
    <property type="match status" value="1"/>
</dbReference>
<dbReference type="Gene3D" id="1.10.287.80">
    <property type="entry name" value="ATP synthase, gamma subunit, helix hairpin domain"/>
    <property type="match status" value="1"/>
</dbReference>
<dbReference type="HAMAP" id="MF_00815">
    <property type="entry name" value="ATP_synth_gamma_bact"/>
    <property type="match status" value="1"/>
</dbReference>
<dbReference type="InterPro" id="IPR035968">
    <property type="entry name" value="ATP_synth_F1_ATPase_gsu"/>
</dbReference>
<dbReference type="InterPro" id="IPR000131">
    <property type="entry name" value="ATP_synth_F1_gsu"/>
</dbReference>
<dbReference type="InterPro" id="IPR023632">
    <property type="entry name" value="ATP_synth_F1_gsu_CS"/>
</dbReference>
<dbReference type="NCBIfam" id="TIGR01146">
    <property type="entry name" value="ATPsyn_F1gamma"/>
    <property type="match status" value="1"/>
</dbReference>
<dbReference type="NCBIfam" id="NF004144">
    <property type="entry name" value="PRK05621.1-1"/>
    <property type="match status" value="1"/>
</dbReference>
<dbReference type="PANTHER" id="PTHR11693">
    <property type="entry name" value="ATP SYNTHASE GAMMA CHAIN"/>
    <property type="match status" value="1"/>
</dbReference>
<dbReference type="PANTHER" id="PTHR11693:SF22">
    <property type="entry name" value="ATP SYNTHASE SUBUNIT GAMMA, MITOCHONDRIAL"/>
    <property type="match status" value="1"/>
</dbReference>
<dbReference type="Pfam" id="PF00231">
    <property type="entry name" value="ATP-synt"/>
    <property type="match status" value="1"/>
</dbReference>
<dbReference type="PRINTS" id="PR00126">
    <property type="entry name" value="ATPASEGAMMA"/>
</dbReference>
<dbReference type="SUPFAM" id="SSF52943">
    <property type="entry name" value="ATP synthase (F1-ATPase), gamma subunit"/>
    <property type="match status" value="1"/>
</dbReference>
<dbReference type="PROSITE" id="PS00153">
    <property type="entry name" value="ATPASE_GAMMA"/>
    <property type="match status" value="1"/>
</dbReference>
<protein>
    <recommendedName>
        <fullName evidence="1">ATP synthase gamma chain</fullName>
    </recommendedName>
    <alternativeName>
        <fullName evidence="1">ATP synthase F1 sector gamma subunit</fullName>
    </alternativeName>
    <alternativeName>
        <fullName evidence="1">F-ATPase gamma subunit</fullName>
    </alternativeName>
</protein>
<gene>
    <name evidence="1" type="primary">atpG</name>
    <name type="ordered locus">ECDH10B_3920</name>
</gene>
<organism>
    <name type="scientific">Escherichia coli (strain K12 / DH10B)</name>
    <dbReference type="NCBI Taxonomy" id="316385"/>
    <lineage>
        <taxon>Bacteria</taxon>
        <taxon>Pseudomonadati</taxon>
        <taxon>Pseudomonadota</taxon>
        <taxon>Gammaproteobacteria</taxon>
        <taxon>Enterobacterales</taxon>
        <taxon>Enterobacteriaceae</taxon>
        <taxon>Escherichia</taxon>
    </lineage>
</organism>
<accession>B1X9W1</accession>
<evidence type="ECO:0000255" key="1">
    <source>
        <dbReference type="HAMAP-Rule" id="MF_00815"/>
    </source>
</evidence>
<feature type="chain" id="PRO_1000134146" description="ATP synthase gamma chain">
    <location>
        <begin position="1"/>
        <end position="287"/>
    </location>
</feature>